<evidence type="ECO:0000255" key="1">
    <source>
        <dbReference type="HAMAP-Rule" id="MF_01694"/>
    </source>
</evidence>
<evidence type="ECO:0000255" key="2">
    <source>
        <dbReference type="PROSITE-ProRule" id="PRU01266"/>
    </source>
</evidence>
<sequence length="332" mass="36841">MKQVQTKRDWKKLAYDVVEEKMITKEDAIAILEADDTEVLEIMNAAYIIRHHHFGKKVKLNMIINTKSGLCPEDCGYCSQSIISEAPIDKYAWLTQEKIVEGAHEAIRRKAGTYCIVASGRRPTDKEVNHVIGAVKEIRETTDLKICCCLGFLNEDQAGLLAEAGVHRYNHNLNTHANNYDSICSTHTYDDRVDTVQKAKQAGISPCSGAIFGMGETIEERAEIAFELQRIDADSIPCNFLVAVKGTPLEGQKELTPVDCLKVLAMMRFVNPTKEIRISGGREINLRSVQPIGLFAANSIFVGDYLTTAGQEPTADWGMIADLGFEIEECAL</sequence>
<gene>
    <name evidence="1" type="primary">bioB</name>
    <name type="ordered locus">BCB4264_A4225</name>
</gene>
<dbReference type="EC" id="2.8.1.6" evidence="1"/>
<dbReference type="EMBL" id="CP001176">
    <property type="protein sequence ID" value="ACK62962.1"/>
    <property type="molecule type" value="Genomic_DNA"/>
</dbReference>
<dbReference type="RefSeq" id="WP_000815852.1">
    <property type="nucleotide sequence ID" value="NC_011725.1"/>
</dbReference>
<dbReference type="SMR" id="B7HAY7"/>
<dbReference type="KEGG" id="bcb:BCB4264_A4225"/>
<dbReference type="HOGENOM" id="CLU_033172_2_1_9"/>
<dbReference type="UniPathway" id="UPA00078">
    <property type="reaction ID" value="UER00162"/>
</dbReference>
<dbReference type="Proteomes" id="UP000007096">
    <property type="component" value="Chromosome"/>
</dbReference>
<dbReference type="GO" id="GO:0051537">
    <property type="term" value="F:2 iron, 2 sulfur cluster binding"/>
    <property type="evidence" value="ECO:0007669"/>
    <property type="project" value="UniProtKB-KW"/>
</dbReference>
<dbReference type="GO" id="GO:0051539">
    <property type="term" value="F:4 iron, 4 sulfur cluster binding"/>
    <property type="evidence" value="ECO:0007669"/>
    <property type="project" value="UniProtKB-KW"/>
</dbReference>
<dbReference type="GO" id="GO:0004076">
    <property type="term" value="F:biotin synthase activity"/>
    <property type="evidence" value="ECO:0007669"/>
    <property type="project" value="UniProtKB-UniRule"/>
</dbReference>
<dbReference type="GO" id="GO:0005506">
    <property type="term" value="F:iron ion binding"/>
    <property type="evidence" value="ECO:0007669"/>
    <property type="project" value="UniProtKB-UniRule"/>
</dbReference>
<dbReference type="GO" id="GO:0009102">
    <property type="term" value="P:biotin biosynthetic process"/>
    <property type="evidence" value="ECO:0007669"/>
    <property type="project" value="UniProtKB-UniRule"/>
</dbReference>
<dbReference type="CDD" id="cd01335">
    <property type="entry name" value="Radical_SAM"/>
    <property type="match status" value="1"/>
</dbReference>
<dbReference type="FunFam" id="3.20.20.70:FF:000026">
    <property type="entry name" value="Biotin synthase"/>
    <property type="match status" value="1"/>
</dbReference>
<dbReference type="Gene3D" id="3.20.20.70">
    <property type="entry name" value="Aldolase class I"/>
    <property type="match status" value="1"/>
</dbReference>
<dbReference type="HAMAP" id="MF_01694">
    <property type="entry name" value="BioB"/>
    <property type="match status" value="1"/>
</dbReference>
<dbReference type="InterPro" id="IPR013785">
    <property type="entry name" value="Aldolase_TIM"/>
</dbReference>
<dbReference type="InterPro" id="IPR010722">
    <property type="entry name" value="BATS_dom"/>
</dbReference>
<dbReference type="InterPro" id="IPR002684">
    <property type="entry name" value="Biotin_synth/BioAB"/>
</dbReference>
<dbReference type="InterPro" id="IPR024177">
    <property type="entry name" value="Biotin_synthase"/>
</dbReference>
<dbReference type="InterPro" id="IPR006638">
    <property type="entry name" value="Elp3/MiaA/NifB-like_rSAM"/>
</dbReference>
<dbReference type="InterPro" id="IPR007197">
    <property type="entry name" value="rSAM"/>
</dbReference>
<dbReference type="NCBIfam" id="TIGR00433">
    <property type="entry name" value="bioB"/>
    <property type="match status" value="1"/>
</dbReference>
<dbReference type="PANTHER" id="PTHR22976">
    <property type="entry name" value="BIOTIN SYNTHASE"/>
    <property type="match status" value="1"/>
</dbReference>
<dbReference type="PANTHER" id="PTHR22976:SF2">
    <property type="entry name" value="BIOTIN SYNTHASE, MITOCHONDRIAL"/>
    <property type="match status" value="1"/>
</dbReference>
<dbReference type="Pfam" id="PF06968">
    <property type="entry name" value="BATS"/>
    <property type="match status" value="1"/>
</dbReference>
<dbReference type="Pfam" id="PF04055">
    <property type="entry name" value="Radical_SAM"/>
    <property type="match status" value="1"/>
</dbReference>
<dbReference type="PIRSF" id="PIRSF001619">
    <property type="entry name" value="Biotin_synth"/>
    <property type="match status" value="1"/>
</dbReference>
<dbReference type="SFLD" id="SFLDG01060">
    <property type="entry name" value="BATS_domain_containing"/>
    <property type="match status" value="1"/>
</dbReference>
<dbReference type="SFLD" id="SFLDG01278">
    <property type="entry name" value="biotin_synthase_like"/>
    <property type="match status" value="1"/>
</dbReference>
<dbReference type="SMART" id="SM00876">
    <property type="entry name" value="BATS"/>
    <property type="match status" value="1"/>
</dbReference>
<dbReference type="SMART" id="SM00729">
    <property type="entry name" value="Elp3"/>
    <property type="match status" value="1"/>
</dbReference>
<dbReference type="SUPFAM" id="SSF102114">
    <property type="entry name" value="Radical SAM enzymes"/>
    <property type="match status" value="1"/>
</dbReference>
<dbReference type="PROSITE" id="PS51918">
    <property type="entry name" value="RADICAL_SAM"/>
    <property type="match status" value="1"/>
</dbReference>
<name>BIOB_BACC4</name>
<comment type="function">
    <text evidence="1">Catalyzes the conversion of dethiobiotin (DTB) to biotin by the insertion of a sulfur atom into dethiobiotin via a radical-based mechanism.</text>
</comment>
<comment type="catalytic activity">
    <reaction evidence="1">
        <text>(4R,5S)-dethiobiotin + (sulfur carrier)-SH + 2 reduced [2Fe-2S]-[ferredoxin] + 2 S-adenosyl-L-methionine = (sulfur carrier)-H + biotin + 2 5'-deoxyadenosine + 2 L-methionine + 2 oxidized [2Fe-2S]-[ferredoxin]</text>
        <dbReference type="Rhea" id="RHEA:22060"/>
        <dbReference type="Rhea" id="RHEA-COMP:10000"/>
        <dbReference type="Rhea" id="RHEA-COMP:10001"/>
        <dbReference type="Rhea" id="RHEA-COMP:14737"/>
        <dbReference type="Rhea" id="RHEA-COMP:14739"/>
        <dbReference type="ChEBI" id="CHEBI:17319"/>
        <dbReference type="ChEBI" id="CHEBI:29917"/>
        <dbReference type="ChEBI" id="CHEBI:33737"/>
        <dbReference type="ChEBI" id="CHEBI:33738"/>
        <dbReference type="ChEBI" id="CHEBI:57586"/>
        <dbReference type="ChEBI" id="CHEBI:57844"/>
        <dbReference type="ChEBI" id="CHEBI:59789"/>
        <dbReference type="ChEBI" id="CHEBI:64428"/>
        <dbReference type="ChEBI" id="CHEBI:149473"/>
        <dbReference type="EC" id="2.8.1.6"/>
    </reaction>
</comment>
<comment type="cofactor">
    <cofactor evidence="1">
        <name>[4Fe-4S] cluster</name>
        <dbReference type="ChEBI" id="CHEBI:49883"/>
    </cofactor>
    <text evidence="1">Binds 1 [4Fe-4S] cluster. The cluster is coordinated with 3 cysteines and an exchangeable S-adenosyl-L-methionine.</text>
</comment>
<comment type="cofactor">
    <cofactor evidence="1">
        <name>[2Fe-2S] cluster</name>
        <dbReference type="ChEBI" id="CHEBI:190135"/>
    </cofactor>
    <text evidence="1">Binds 1 [2Fe-2S] cluster. The cluster is coordinated with 3 cysteines and 1 arginine.</text>
</comment>
<comment type="pathway">
    <text evidence="1">Cofactor biosynthesis; biotin biosynthesis; biotin from 7,8-diaminononanoate: step 2/2.</text>
</comment>
<comment type="subunit">
    <text evidence="1">Homodimer.</text>
</comment>
<comment type="similarity">
    <text evidence="1">Belongs to the radical SAM superfamily. Biotin synthase family.</text>
</comment>
<organism>
    <name type="scientific">Bacillus cereus (strain B4264)</name>
    <dbReference type="NCBI Taxonomy" id="405532"/>
    <lineage>
        <taxon>Bacteria</taxon>
        <taxon>Bacillati</taxon>
        <taxon>Bacillota</taxon>
        <taxon>Bacilli</taxon>
        <taxon>Bacillales</taxon>
        <taxon>Bacillaceae</taxon>
        <taxon>Bacillus</taxon>
        <taxon>Bacillus cereus group</taxon>
    </lineage>
</organism>
<accession>B7HAY7</accession>
<protein>
    <recommendedName>
        <fullName evidence="1">Biotin synthase</fullName>
        <ecNumber evidence="1">2.8.1.6</ecNumber>
    </recommendedName>
</protein>
<reference key="1">
    <citation type="submission" date="2008-10" db="EMBL/GenBank/DDBJ databases">
        <title>Genome sequence of Bacillus cereus B4264.</title>
        <authorList>
            <person name="Dodson R.J."/>
            <person name="Durkin A.S."/>
            <person name="Rosovitz M.J."/>
            <person name="Rasko D.A."/>
            <person name="Hoffmaster A."/>
            <person name="Ravel J."/>
            <person name="Sutton G."/>
        </authorList>
    </citation>
    <scope>NUCLEOTIDE SEQUENCE [LARGE SCALE GENOMIC DNA]</scope>
    <source>
        <strain>B4264</strain>
    </source>
</reference>
<proteinExistence type="inferred from homology"/>
<feature type="chain" id="PRO_0000381221" description="Biotin synthase">
    <location>
        <begin position="1"/>
        <end position="332"/>
    </location>
</feature>
<feature type="domain" description="Radical SAM core" evidence="2">
    <location>
        <begin position="53"/>
        <end position="282"/>
    </location>
</feature>
<feature type="binding site" evidence="1">
    <location>
        <position position="71"/>
    </location>
    <ligand>
        <name>[4Fe-4S] cluster</name>
        <dbReference type="ChEBI" id="CHEBI:49883"/>
        <note>4Fe-4S-S-AdoMet</note>
    </ligand>
</feature>
<feature type="binding site" evidence="1">
    <location>
        <position position="75"/>
    </location>
    <ligand>
        <name>[4Fe-4S] cluster</name>
        <dbReference type="ChEBI" id="CHEBI:49883"/>
        <note>4Fe-4S-S-AdoMet</note>
    </ligand>
</feature>
<feature type="binding site" evidence="1">
    <location>
        <position position="78"/>
    </location>
    <ligand>
        <name>[4Fe-4S] cluster</name>
        <dbReference type="ChEBI" id="CHEBI:49883"/>
        <note>4Fe-4S-S-AdoMet</note>
    </ligand>
</feature>
<feature type="binding site" evidence="1">
    <location>
        <position position="115"/>
    </location>
    <ligand>
        <name>[2Fe-2S] cluster</name>
        <dbReference type="ChEBI" id="CHEBI:190135"/>
    </ligand>
</feature>
<feature type="binding site" evidence="1">
    <location>
        <position position="147"/>
    </location>
    <ligand>
        <name>[2Fe-2S] cluster</name>
        <dbReference type="ChEBI" id="CHEBI:190135"/>
    </ligand>
</feature>
<feature type="binding site" evidence="1">
    <location>
        <position position="207"/>
    </location>
    <ligand>
        <name>[2Fe-2S] cluster</name>
        <dbReference type="ChEBI" id="CHEBI:190135"/>
    </ligand>
</feature>
<feature type="binding site" evidence="1">
    <location>
        <position position="277"/>
    </location>
    <ligand>
        <name>[2Fe-2S] cluster</name>
        <dbReference type="ChEBI" id="CHEBI:190135"/>
    </ligand>
</feature>
<keyword id="KW-0001">2Fe-2S</keyword>
<keyword id="KW-0004">4Fe-4S</keyword>
<keyword id="KW-0093">Biotin biosynthesis</keyword>
<keyword id="KW-0408">Iron</keyword>
<keyword id="KW-0411">Iron-sulfur</keyword>
<keyword id="KW-0479">Metal-binding</keyword>
<keyword id="KW-0949">S-adenosyl-L-methionine</keyword>
<keyword id="KW-0808">Transferase</keyword>